<keyword id="KW-0028">Amino-acid biosynthesis</keyword>
<keyword id="KW-0067">ATP-binding</keyword>
<keyword id="KW-0198">Cysteine biosynthesis</keyword>
<keyword id="KW-0418">Kinase</keyword>
<keyword id="KW-0486">Methionine biosynthesis</keyword>
<keyword id="KW-0547">Nucleotide-binding</keyword>
<keyword id="KW-0597">Phosphoprotein</keyword>
<keyword id="KW-0808">Transferase</keyword>
<protein>
    <recommendedName>
        <fullName>Adenylyl-sulfate kinase</fullName>
        <ecNumber>2.7.1.25</ecNumber>
    </recommendedName>
    <alternativeName>
        <fullName>ATP adenosine-5'-phosphosulfate 3'-phosphotransferase</fullName>
    </alternativeName>
    <alternativeName>
        <fullName>Adenosine-5'-phosphosulfate kinase</fullName>
        <shortName>APS kinase</shortName>
    </alternativeName>
</protein>
<feature type="chain" id="PRO_0000105934" description="Adenylyl-sulfate kinase">
    <location>
        <begin position="1"/>
        <end position="202"/>
    </location>
</feature>
<feature type="active site" description="Phosphoserine intermediate" evidence="1">
    <location>
        <position position="105"/>
    </location>
</feature>
<feature type="binding site" evidence="1">
    <location>
        <begin position="31"/>
        <end position="38"/>
    </location>
    <ligand>
        <name>ATP</name>
        <dbReference type="ChEBI" id="CHEBI:30616"/>
    </ligand>
</feature>
<reference key="1">
    <citation type="submission" date="2000-10" db="EMBL/GenBank/DDBJ databases">
        <title>Divergence of nucleotide sequence of centromeric region between Saccharomyces bayanus and Saccharomyces cerevisiae.</title>
        <authorList>
            <person name="Matsuzaki H."/>
            <person name="Karashima H."/>
            <person name="Hatano T."/>
            <person name="Fukui S."/>
        </authorList>
    </citation>
    <scope>NUCLEOTIDE SEQUENCE [GENOMIC DNA]</scope>
    <source>
        <strain>B19-3C</strain>
    </source>
</reference>
<dbReference type="EC" id="2.7.1.25"/>
<dbReference type="EMBL" id="AB049836">
    <property type="protein sequence ID" value="BAB16753.1"/>
    <property type="molecule type" value="Genomic_DNA"/>
</dbReference>
<dbReference type="SMR" id="Q9HGF8"/>
<dbReference type="UniPathway" id="UPA00140">
    <property type="reaction ID" value="UER00205"/>
</dbReference>
<dbReference type="GO" id="GO:0004020">
    <property type="term" value="F:adenylylsulfate kinase activity"/>
    <property type="evidence" value="ECO:0007669"/>
    <property type="project" value="UniProtKB-EC"/>
</dbReference>
<dbReference type="GO" id="GO:0005524">
    <property type="term" value="F:ATP binding"/>
    <property type="evidence" value="ECO:0007669"/>
    <property type="project" value="UniProtKB-KW"/>
</dbReference>
<dbReference type="GO" id="GO:0019344">
    <property type="term" value="P:cysteine biosynthetic process"/>
    <property type="evidence" value="ECO:0007669"/>
    <property type="project" value="UniProtKB-KW"/>
</dbReference>
<dbReference type="GO" id="GO:0070814">
    <property type="term" value="P:hydrogen sulfide biosynthetic process"/>
    <property type="evidence" value="ECO:0007669"/>
    <property type="project" value="UniProtKB-UniPathway"/>
</dbReference>
<dbReference type="GO" id="GO:0009086">
    <property type="term" value="P:methionine biosynthetic process"/>
    <property type="evidence" value="ECO:0007669"/>
    <property type="project" value="UniProtKB-KW"/>
</dbReference>
<dbReference type="GO" id="GO:0000103">
    <property type="term" value="P:sulfate assimilation"/>
    <property type="evidence" value="ECO:0007669"/>
    <property type="project" value="InterPro"/>
</dbReference>
<dbReference type="CDD" id="cd02027">
    <property type="entry name" value="APSK"/>
    <property type="match status" value="1"/>
</dbReference>
<dbReference type="FunFam" id="3.40.50.300:FF:000212">
    <property type="entry name" value="Adenylyl-sulfate kinase"/>
    <property type="match status" value="1"/>
</dbReference>
<dbReference type="Gene3D" id="3.40.50.300">
    <property type="entry name" value="P-loop containing nucleotide triphosphate hydrolases"/>
    <property type="match status" value="1"/>
</dbReference>
<dbReference type="HAMAP" id="MF_00065">
    <property type="entry name" value="Adenylyl_sulf_kinase"/>
    <property type="match status" value="1"/>
</dbReference>
<dbReference type="InterPro" id="IPR002891">
    <property type="entry name" value="APS_kinase"/>
</dbReference>
<dbReference type="InterPro" id="IPR027417">
    <property type="entry name" value="P-loop_NTPase"/>
</dbReference>
<dbReference type="NCBIfam" id="TIGR00455">
    <property type="entry name" value="apsK"/>
    <property type="match status" value="1"/>
</dbReference>
<dbReference type="NCBIfam" id="NF003013">
    <property type="entry name" value="PRK03846.1"/>
    <property type="match status" value="1"/>
</dbReference>
<dbReference type="PANTHER" id="PTHR11055">
    <property type="entry name" value="BIFUNCTIONAL 3'-PHOSPHOADENOSINE 5'-PHOSPHOSULFATE SYNTHASE"/>
    <property type="match status" value="1"/>
</dbReference>
<dbReference type="PANTHER" id="PTHR11055:SF1">
    <property type="entry name" value="PAPS SYNTHETASE, ISOFORM D"/>
    <property type="match status" value="1"/>
</dbReference>
<dbReference type="Pfam" id="PF01583">
    <property type="entry name" value="APS_kinase"/>
    <property type="match status" value="1"/>
</dbReference>
<dbReference type="SUPFAM" id="SSF52540">
    <property type="entry name" value="P-loop containing nucleoside triphosphate hydrolases"/>
    <property type="match status" value="1"/>
</dbReference>
<evidence type="ECO:0000250" key="1"/>
<evidence type="ECO:0000305" key="2"/>
<sequence>MATNITWHPNLTYDERKELRKQDGCTVWLTGLSASGKSTIACALEQLLLQKNLSAYRLDGDNIRFGLNKDLGFSEQDRNENIRRISEVSKLFADSCAVSITSFISPYRVDRDRARDLHKEAGLKFIEIFVDVPLEVAEQRDPKGLYKKAREGVIKEFTGISAPYEAPKAPELHLRTDQKTVEECAAIIYEYLVNEKIIRKHL</sequence>
<accession>Q9HGF8</accession>
<gene>
    <name type="primary">MET14</name>
</gene>
<comment type="function">
    <text>Catalyzes the synthesis of activated sulfate.</text>
</comment>
<comment type="catalytic activity">
    <reaction>
        <text>adenosine 5'-phosphosulfate + ATP = 3'-phosphoadenylyl sulfate + ADP + H(+)</text>
        <dbReference type="Rhea" id="RHEA:24152"/>
        <dbReference type="ChEBI" id="CHEBI:15378"/>
        <dbReference type="ChEBI" id="CHEBI:30616"/>
        <dbReference type="ChEBI" id="CHEBI:58243"/>
        <dbReference type="ChEBI" id="CHEBI:58339"/>
        <dbReference type="ChEBI" id="CHEBI:456216"/>
        <dbReference type="EC" id="2.7.1.25"/>
    </reaction>
</comment>
<comment type="pathway">
    <text>Sulfur metabolism; hydrogen sulfide biosynthesis; sulfite from sulfate: step 2/3.</text>
</comment>
<comment type="similarity">
    <text evidence="2">Belongs to the APS kinase family.</text>
</comment>
<name>KAPS_SACBA</name>
<organism>
    <name type="scientific">Saccharomyces bayanus</name>
    <name type="common">Yeast</name>
    <name type="synonym">Saccharomyces uvarum x Saccharomyces eubayanus</name>
    <dbReference type="NCBI Taxonomy" id="4931"/>
    <lineage>
        <taxon>Eukaryota</taxon>
        <taxon>Fungi</taxon>
        <taxon>Dikarya</taxon>
        <taxon>Ascomycota</taxon>
        <taxon>Saccharomycotina</taxon>
        <taxon>Saccharomycetes</taxon>
        <taxon>Saccharomycetales</taxon>
        <taxon>Saccharomycetaceae</taxon>
        <taxon>Saccharomyces</taxon>
    </lineage>
</organism>
<proteinExistence type="inferred from homology"/>